<reference key="1">
    <citation type="submission" date="2007-10" db="EMBL/GenBank/DDBJ databases">
        <title>Genome sequence of Campylobacter concisus 13826 isolated from human feces.</title>
        <authorList>
            <person name="Fouts D.E."/>
            <person name="Mongodin E.F."/>
            <person name="Puiu D."/>
            <person name="Sebastian Y."/>
            <person name="Miller W.G."/>
            <person name="Mandrell R.E."/>
            <person name="On S."/>
            <person name="Nelson K.E."/>
        </authorList>
    </citation>
    <scope>NUCLEOTIDE SEQUENCE [LARGE SCALE GENOMIC DNA]</scope>
    <source>
        <strain>13826</strain>
    </source>
</reference>
<evidence type="ECO:0000255" key="1">
    <source>
        <dbReference type="HAMAP-Rule" id="MF_01694"/>
    </source>
</evidence>
<evidence type="ECO:0000255" key="2">
    <source>
        <dbReference type="PROSITE-ProRule" id="PRU01266"/>
    </source>
</evidence>
<feature type="chain" id="PRO_0000381280" description="Biotin synthase">
    <location>
        <begin position="1"/>
        <end position="279"/>
    </location>
</feature>
<feature type="domain" description="Radical SAM core" evidence="2">
    <location>
        <begin position="2"/>
        <end position="228"/>
    </location>
</feature>
<feature type="binding site" evidence="1">
    <location>
        <position position="17"/>
    </location>
    <ligand>
        <name>[4Fe-4S] cluster</name>
        <dbReference type="ChEBI" id="CHEBI:49883"/>
        <note>4Fe-4S-S-AdoMet</note>
    </ligand>
</feature>
<feature type="binding site" evidence="1">
    <location>
        <position position="21"/>
    </location>
    <ligand>
        <name>[4Fe-4S] cluster</name>
        <dbReference type="ChEBI" id="CHEBI:49883"/>
        <note>4Fe-4S-S-AdoMet</note>
    </ligand>
</feature>
<feature type="binding site" evidence="1">
    <location>
        <position position="24"/>
    </location>
    <ligand>
        <name>[4Fe-4S] cluster</name>
        <dbReference type="ChEBI" id="CHEBI:49883"/>
        <note>4Fe-4S-S-AdoMet</note>
    </ligand>
</feature>
<feature type="binding site" evidence="1">
    <location>
        <position position="61"/>
    </location>
    <ligand>
        <name>[2Fe-2S] cluster</name>
        <dbReference type="ChEBI" id="CHEBI:190135"/>
    </ligand>
</feature>
<feature type="binding site" evidence="1">
    <location>
        <position position="96"/>
    </location>
    <ligand>
        <name>[2Fe-2S] cluster</name>
        <dbReference type="ChEBI" id="CHEBI:190135"/>
    </ligand>
</feature>
<feature type="binding site" evidence="1">
    <location>
        <position position="154"/>
    </location>
    <ligand>
        <name>[2Fe-2S] cluster</name>
        <dbReference type="ChEBI" id="CHEBI:190135"/>
    </ligand>
</feature>
<feature type="binding site" evidence="1">
    <location>
        <position position="221"/>
    </location>
    <ligand>
        <name>[2Fe-2S] cluster</name>
        <dbReference type="ChEBI" id="CHEBI:190135"/>
    </ligand>
</feature>
<protein>
    <recommendedName>
        <fullName evidence="1">Biotin synthase</fullName>
        <ecNumber evidence="1">2.8.1.6</ecNumber>
    </recommendedName>
</protein>
<organism>
    <name type="scientific">Campylobacter concisus (strain 13826)</name>
    <dbReference type="NCBI Taxonomy" id="360104"/>
    <lineage>
        <taxon>Bacteria</taxon>
        <taxon>Pseudomonadati</taxon>
        <taxon>Campylobacterota</taxon>
        <taxon>Epsilonproteobacteria</taxon>
        <taxon>Campylobacterales</taxon>
        <taxon>Campylobacteraceae</taxon>
        <taxon>Campylobacter</taxon>
    </lineage>
</organism>
<proteinExistence type="inferred from homology"/>
<accession>A7ZFR4</accession>
<name>BIOB_CAMC1</name>
<keyword id="KW-0001">2Fe-2S</keyword>
<keyword id="KW-0004">4Fe-4S</keyword>
<keyword id="KW-0093">Biotin biosynthesis</keyword>
<keyword id="KW-0408">Iron</keyword>
<keyword id="KW-0411">Iron-sulfur</keyword>
<keyword id="KW-0479">Metal-binding</keyword>
<keyword id="KW-0949">S-adenosyl-L-methionine</keyword>
<keyword id="KW-0808">Transferase</keyword>
<gene>
    <name evidence="1" type="primary">bioB</name>
    <name type="ordered locus">Ccon26_17860</name>
    <name type="ORF">CCC13826_2293</name>
</gene>
<dbReference type="EC" id="2.8.1.6" evidence="1"/>
<dbReference type="EMBL" id="CP000792">
    <property type="protein sequence ID" value="EAT97930.1"/>
    <property type="molecule type" value="Genomic_DNA"/>
</dbReference>
<dbReference type="RefSeq" id="WP_012140488.1">
    <property type="nucleotide sequence ID" value="NC_009802.2"/>
</dbReference>
<dbReference type="SMR" id="A7ZFR4"/>
<dbReference type="STRING" id="360104.CCC13826_2293"/>
<dbReference type="KEGG" id="cco:CCC13826_2293"/>
<dbReference type="eggNOG" id="COG0502">
    <property type="taxonomic scope" value="Bacteria"/>
</dbReference>
<dbReference type="HOGENOM" id="CLU_033172_2_1_7"/>
<dbReference type="OrthoDB" id="9786826at2"/>
<dbReference type="UniPathway" id="UPA00078">
    <property type="reaction ID" value="UER00162"/>
</dbReference>
<dbReference type="Proteomes" id="UP000001121">
    <property type="component" value="Chromosome"/>
</dbReference>
<dbReference type="GO" id="GO:0051537">
    <property type="term" value="F:2 iron, 2 sulfur cluster binding"/>
    <property type="evidence" value="ECO:0007669"/>
    <property type="project" value="UniProtKB-KW"/>
</dbReference>
<dbReference type="GO" id="GO:0051539">
    <property type="term" value="F:4 iron, 4 sulfur cluster binding"/>
    <property type="evidence" value="ECO:0007669"/>
    <property type="project" value="UniProtKB-KW"/>
</dbReference>
<dbReference type="GO" id="GO:0004076">
    <property type="term" value="F:biotin synthase activity"/>
    <property type="evidence" value="ECO:0007669"/>
    <property type="project" value="UniProtKB-UniRule"/>
</dbReference>
<dbReference type="GO" id="GO:0005506">
    <property type="term" value="F:iron ion binding"/>
    <property type="evidence" value="ECO:0007669"/>
    <property type="project" value="UniProtKB-UniRule"/>
</dbReference>
<dbReference type="GO" id="GO:0009102">
    <property type="term" value="P:biotin biosynthetic process"/>
    <property type="evidence" value="ECO:0007669"/>
    <property type="project" value="UniProtKB-UniRule"/>
</dbReference>
<dbReference type="CDD" id="cd01335">
    <property type="entry name" value="Radical_SAM"/>
    <property type="match status" value="1"/>
</dbReference>
<dbReference type="Gene3D" id="3.20.20.70">
    <property type="entry name" value="Aldolase class I"/>
    <property type="match status" value="1"/>
</dbReference>
<dbReference type="HAMAP" id="MF_01694">
    <property type="entry name" value="BioB"/>
    <property type="match status" value="1"/>
</dbReference>
<dbReference type="InterPro" id="IPR013785">
    <property type="entry name" value="Aldolase_TIM"/>
</dbReference>
<dbReference type="InterPro" id="IPR010722">
    <property type="entry name" value="BATS_dom"/>
</dbReference>
<dbReference type="InterPro" id="IPR002684">
    <property type="entry name" value="Biotin_synth/BioAB"/>
</dbReference>
<dbReference type="InterPro" id="IPR024177">
    <property type="entry name" value="Biotin_synthase"/>
</dbReference>
<dbReference type="InterPro" id="IPR006638">
    <property type="entry name" value="Elp3/MiaA/NifB-like_rSAM"/>
</dbReference>
<dbReference type="InterPro" id="IPR007197">
    <property type="entry name" value="rSAM"/>
</dbReference>
<dbReference type="NCBIfam" id="TIGR00433">
    <property type="entry name" value="bioB"/>
    <property type="match status" value="1"/>
</dbReference>
<dbReference type="NCBIfam" id="NF006308">
    <property type="entry name" value="PRK08508.1"/>
    <property type="match status" value="1"/>
</dbReference>
<dbReference type="PANTHER" id="PTHR22976">
    <property type="entry name" value="BIOTIN SYNTHASE"/>
    <property type="match status" value="1"/>
</dbReference>
<dbReference type="PANTHER" id="PTHR22976:SF2">
    <property type="entry name" value="BIOTIN SYNTHASE, MITOCHONDRIAL"/>
    <property type="match status" value="1"/>
</dbReference>
<dbReference type="Pfam" id="PF06968">
    <property type="entry name" value="BATS"/>
    <property type="match status" value="1"/>
</dbReference>
<dbReference type="Pfam" id="PF04055">
    <property type="entry name" value="Radical_SAM"/>
    <property type="match status" value="1"/>
</dbReference>
<dbReference type="PIRSF" id="PIRSF001619">
    <property type="entry name" value="Biotin_synth"/>
    <property type="match status" value="1"/>
</dbReference>
<dbReference type="SFLD" id="SFLDG01278">
    <property type="entry name" value="biotin_synthase_like"/>
    <property type="match status" value="1"/>
</dbReference>
<dbReference type="SFLD" id="SFLDS00029">
    <property type="entry name" value="Radical_SAM"/>
    <property type="match status" value="1"/>
</dbReference>
<dbReference type="SMART" id="SM00876">
    <property type="entry name" value="BATS"/>
    <property type="match status" value="1"/>
</dbReference>
<dbReference type="SMART" id="SM00729">
    <property type="entry name" value="Elp3"/>
    <property type="match status" value="1"/>
</dbReference>
<dbReference type="SUPFAM" id="SSF102114">
    <property type="entry name" value="Radical SAM enzymes"/>
    <property type="match status" value="1"/>
</dbReference>
<dbReference type="PROSITE" id="PS51918">
    <property type="entry name" value="RADICAL_SAM"/>
    <property type="match status" value="1"/>
</dbReference>
<sequence>MKTIMLCAICSVTQGNCVEDCAYCTQSAKAGADITKFKEKSVQQVVDEAKMAYKNHALGFCLVTSGARLNDKKTDYIASLARAVHKEVPNLMLIACNGMATYEQLCELKNAGIFSYNHNLETSREYFPKICTTHSWDERYQTNLDAKRAGLMLCTGGIYGVGESEADRVSFRASLKELEPFSSPINFFIRSDALRLDQPPLSADEALKIVRETKSALPETRVMIAGGREKILGERQYEIFENGADAIVIGDYLTAKGEKASKDIEELTKRGFSFASICH</sequence>
<comment type="function">
    <text evidence="1">Catalyzes the conversion of dethiobiotin (DTB) to biotin by the insertion of a sulfur atom into dethiobiotin via a radical-based mechanism.</text>
</comment>
<comment type="catalytic activity">
    <reaction evidence="1">
        <text>(4R,5S)-dethiobiotin + (sulfur carrier)-SH + 2 reduced [2Fe-2S]-[ferredoxin] + 2 S-adenosyl-L-methionine = (sulfur carrier)-H + biotin + 2 5'-deoxyadenosine + 2 L-methionine + 2 oxidized [2Fe-2S]-[ferredoxin]</text>
        <dbReference type="Rhea" id="RHEA:22060"/>
        <dbReference type="Rhea" id="RHEA-COMP:10000"/>
        <dbReference type="Rhea" id="RHEA-COMP:10001"/>
        <dbReference type="Rhea" id="RHEA-COMP:14737"/>
        <dbReference type="Rhea" id="RHEA-COMP:14739"/>
        <dbReference type="ChEBI" id="CHEBI:17319"/>
        <dbReference type="ChEBI" id="CHEBI:29917"/>
        <dbReference type="ChEBI" id="CHEBI:33737"/>
        <dbReference type="ChEBI" id="CHEBI:33738"/>
        <dbReference type="ChEBI" id="CHEBI:57586"/>
        <dbReference type="ChEBI" id="CHEBI:57844"/>
        <dbReference type="ChEBI" id="CHEBI:59789"/>
        <dbReference type="ChEBI" id="CHEBI:64428"/>
        <dbReference type="ChEBI" id="CHEBI:149473"/>
        <dbReference type="EC" id="2.8.1.6"/>
    </reaction>
</comment>
<comment type="cofactor">
    <cofactor evidence="1">
        <name>[4Fe-4S] cluster</name>
        <dbReference type="ChEBI" id="CHEBI:49883"/>
    </cofactor>
    <text evidence="1">Binds 1 [4Fe-4S] cluster. The cluster is coordinated with 3 cysteines and an exchangeable S-adenosyl-L-methionine.</text>
</comment>
<comment type="cofactor">
    <cofactor evidence="1">
        <name>[2Fe-2S] cluster</name>
        <dbReference type="ChEBI" id="CHEBI:190135"/>
    </cofactor>
    <text evidence="1">Binds 1 [2Fe-2S] cluster. The cluster is coordinated with 3 cysteines and 1 arginine.</text>
</comment>
<comment type="pathway">
    <text evidence="1">Cofactor biosynthesis; biotin biosynthesis; biotin from 7,8-diaminononanoate: step 2/2.</text>
</comment>
<comment type="subunit">
    <text evidence="1">Homodimer.</text>
</comment>
<comment type="similarity">
    <text evidence="1">Belongs to the radical SAM superfamily. Biotin synthase family.</text>
</comment>